<name>AI2_MYCMD</name>
<protein>
    <recommendedName>
        <fullName>Probable intron-encoded endonuclease aI2</fullName>
    </recommendedName>
    <component>
        <recommendedName>
            <fullName>Truncated non-functional cytochrome oxidase 1</fullName>
        </recommendedName>
    </component>
    <component>
        <recommendedName>
            <fullName>Intron-encoded endonuclease aI2</fullName>
            <ecNumber>3.1.-.-</ecNumber>
        </recommendedName>
    </component>
</protein>
<dbReference type="EC" id="3.1.-.-"/>
<dbReference type="EMBL" id="DQ157700">
    <property type="protein sequence ID" value="AAZ67028.1"/>
    <property type="status" value="ALT_SEQ"/>
    <property type="molecule type" value="Genomic_DNA"/>
</dbReference>
<dbReference type="EMBL" id="AACP01000277">
    <property type="status" value="NOT_ANNOTATED_CDS"/>
    <property type="molecule type" value="Genomic_DNA"/>
</dbReference>
<dbReference type="SMR" id="Q0H8X8"/>
<dbReference type="STRING" id="237631.Q0H8X8"/>
<dbReference type="InParanoid" id="Q0H8X8"/>
<dbReference type="Proteomes" id="UP000000561">
    <property type="component" value="Mitochondrion"/>
</dbReference>
<dbReference type="GO" id="GO:0005739">
    <property type="term" value="C:mitochondrion"/>
    <property type="evidence" value="ECO:0007669"/>
    <property type="project" value="UniProtKB-SubCell"/>
</dbReference>
<dbReference type="GO" id="GO:0045277">
    <property type="term" value="C:respiratory chain complex IV"/>
    <property type="evidence" value="ECO:0000318"/>
    <property type="project" value="GO_Central"/>
</dbReference>
<dbReference type="GO" id="GO:0004129">
    <property type="term" value="F:cytochrome-c oxidase activity"/>
    <property type="evidence" value="ECO:0007669"/>
    <property type="project" value="InterPro"/>
</dbReference>
<dbReference type="GO" id="GO:0004519">
    <property type="term" value="F:endonuclease activity"/>
    <property type="evidence" value="ECO:0007669"/>
    <property type="project" value="UniProtKB-KW"/>
</dbReference>
<dbReference type="GO" id="GO:0020037">
    <property type="term" value="F:heme binding"/>
    <property type="evidence" value="ECO:0007669"/>
    <property type="project" value="InterPro"/>
</dbReference>
<dbReference type="GO" id="GO:0009060">
    <property type="term" value="P:aerobic respiration"/>
    <property type="evidence" value="ECO:0000318"/>
    <property type="project" value="GO_Central"/>
</dbReference>
<dbReference type="GO" id="GO:0006314">
    <property type="term" value="P:intron homing"/>
    <property type="evidence" value="ECO:0007669"/>
    <property type="project" value="UniProtKB-KW"/>
</dbReference>
<dbReference type="GO" id="GO:0022904">
    <property type="term" value="P:respiratory electron transport chain"/>
    <property type="evidence" value="ECO:0000318"/>
    <property type="project" value="GO_Central"/>
</dbReference>
<dbReference type="FunFam" id="3.10.28.10:FF:000033">
    <property type="entry name" value="Probable intron-encoded endonuclease aI2"/>
    <property type="match status" value="1"/>
</dbReference>
<dbReference type="Gene3D" id="1.20.210.10">
    <property type="entry name" value="Cytochrome c oxidase-like, subunit I domain"/>
    <property type="match status" value="1"/>
</dbReference>
<dbReference type="Gene3D" id="3.10.28.10">
    <property type="entry name" value="Homing endonucleases"/>
    <property type="match status" value="2"/>
</dbReference>
<dbReference type="InterPro" id="IPR023616">
    <property type="entry name" value="Cyt_c_oxase-like_su1_dom"/>
</dbReference>
<dbReference type="InterPro" id="IPR036927">
    <property type="entry name" value="Cyt_c_oxase-like_su1_sf"/>
</dbReference>
<dbReference type="InterPro" id="IPR000883">
    <property type="entry name" value="Cyt_C_Oxase_1"/>
</dbReference>
<dbReference type="InterPro" id="IPR027434">
    <property type="entry name" value="Homing_endonucl"/>
</dbReference>
<dbReference type="InterPro" id="IPR004860">
    <property type="entry name" value="LAGLIDADG_dom"/>
</dbReference>
<dbReference type="PANTHER" id="PTHR10422">
    <property type="entry name" value="CYTOCHROME C OXIDASE SUBUNIT 1"/>
    <property type="match status" value="1"/>
</dbReference>
<dbReference type="PANTHER" id="PTHR10422:SF18">
    <property type="entry name" value="CYTOCHROME C OXIDASE SUBUNIT 1"/>
    <property type="match status" value="1"/>
</dbReference>
<dbReference type="Pfam" id="PF00115">
    <property type="entry name" value="COX1"/>
    <property type="match status" value="1"/>
</dbReference>
<dbReference type="Pfam" id="PF00961">
    <property type="entry name" value="LAGLIDADG_1"/>
    <property type="match status" value="2"/>
</dbReference>
<dbReference type="PRINTS" id="PR01165">
    <property type="entry name" value="CYCOXIDASEI"/>
</dbReference>
<dbReference type="SUPFAM" id="SSF81442">
    <property type="entry name" value="Cytochrome c oxidase subunit I-like"/>
    <property type="match status" value="1"/>
</dbReference>
<dbReference type="SUPFAM" id="SSF55608">
    <property type="entry name" value="Homing endonucleases"/>
    <property type="match status" value="2"/>
</dbReference>
<dbReference type="PROSITE" id="PS50855">
    <property type="entry name" value="COX1"/>
    <property type="match status" value="1"/>
</dbReference>
<accession>Q0H8X8</accession>
<organism>
    <name type="scientific">Mycosarcoma maydis</name>
    <name type="common">Corn smut fungus</name>
    <name type="synonym">Ustilago maydis</name>
    <dbReference type="NCBI Taxonomy" id="5270"/>
    <lineage>
        <taxon>Eukaryota</taxon>
        <taxon>Fungi</taxon>
        <taxon>Dikarya</taxon>
        <taxon>Basidiomycota</taxon>
        <taxon>Ustilaginomycotina</taxon>
        <taxon>Ustilaginomycetes</taxon>
        <taxon>Ustilaginales</taxon>
        <taxon>Ustilaginaceae</taxon>
        <taxon>Mycosarcoma</taxon>
    </lineage>
</organism>
<geneLocation type="mitochondrion"/>
<comment type="function">
    <text evidence="1">Mitochondrial DNA endonuclease involved in intron homing.</text>
</comment>
<comment type="subcellular location">
    <subcellularLocation>
        <location>Mitochondrion</location>
    </subcellularLocation>
    <subcellularLocation>
        <location evidence="3">Membrane</location>
        <topology evidence="3">Multi-pass membrane protein</topology>
    </subcellularLocation>
</comment>
<comment type="PTM">
    <text>The mature protein may arise from proteolytic cleavage of an in-frame translation of COX1 exons 1 and 2 plus intron 2, containing the aI2 open reading frame.</text>
</comment>
<comment type="similarity">
    <text evidence="3">In the C-terminal section; belongs to the LAGLIDADG endonuclease family.</text>
</comment>
<comment type="similarity">
    <text evidence="3">In the N-terminal section; belongs to the heme-copper respiratory oxidase family.</text>
</comment>
<comment type="sequence caution" evidence="3">
    <conflict type="erroneous gene model prediction">
        <sequence resource="EMBL-CDS" id="AAZ67028"/>
    </conflict>
</comment>
<evidence type="ECO:0000250" key="1"/>
<evidence type="ECO:0000255" key="2"/>
<evidence type="ECO:0000305" key="3"/>
<gene>
    <name type="primary">aI2</name>
</gene>
<reference key="1">
    <citation type="submission" date="2005-08" db="EMBL/GenBank/DDBJ databases">
        <title>Annotation of mitochondrial genome of Ustilago maydis and comparative analysis of basidiomycete mtDNAs.</title>
        <authorList>
            <person name="Kennell J.C."/>
            <person name="Boehmer C."/>
        </authorList>
    </citation>
    <scope>NUCLEOTIDE SEQUENCE [LARGE SCALE GENOMIC DNA]</scope>
    <source>
        <strain>DSM 14603 / FGSC 9021 / UM521</strain>
    </source>
</reference>
<reference key="2">
    <citation type="journal article" date="2006" name="Nature">
        <title>Insights from the genome of the biotrophic fungal plant pathogen Ustilago maydis.</title>
        <authorList>
            <person name="Kaemper J."/>
            <person name="Kahmann R."/>
            <person name="Boelker M."/>
            <person name="Ma L.-J."/>
            <person name="Brefort T."/>
            <person name="Saville B.J."/>
            <person name="Banuett F."/>
            <person name="Kronstad J.W."/>
            <person name="Gold S.E."/>
            <person name="Mueller O."/>
            <person name="Perlin M.H."/>
            <person name="Woesten H.A.B."/>
            <person name="de Vries R."/>
            <person name="Ruiz-Herrera J."/>
            <person name="Reynaga-Pena C.G."/>
            <person name="Snetselaar K."/>
            <person name="McCann M."/>
            <person name="Perez-Martin J."/>
            <person name="Feldbruegge M."/>
            <person name="Basse C.W."/>
            <person name="Steinberg G."/>
            <person name="Ibeas J.I."/>
            <person name="Holloman W."/>
            <person name="Guzman P."/>
            <person name="Farman M.L."/>
            <person name="Stajich J.E."/>
            <person name="Sentandreu R."/>
            <person name="Gonzalez-Prieto J.M."/>
            <person name="Kennell J.C."/>
            <person name="Molina L."/>
            <person name="Schirawski J."/>
            <person name="Mendoza-Mendoza A."/>
            <person name="Greilinger D."/>
            <person name="Muench K."/>
            <person name="Roessel N."/>
            <person name="Scherer M."/>
            <person name="Vranes M."/>
            <person name="Ladendorf O."/>
            <person name="Vincon V."/>
            <person name="Fuchs U."/>
            <person name="Sandrock B."/>
            <person name="Meng S."/>
            <person name="Ho E.C.H."/>
            <person name="Cahill M.J."/>
            <person name="Boyce K.J."/>
            <person name="Klose J."/>
            <person name="Klosterman S.J."/>
            <person name="Deelstra H.J."/>
            <person name="Ortiz-Castellanos L."/>
            <person name="Li W."/>
            <person name="Sanchez-Alonso P."/>
            <person name="Schreier P.H."/>
            <person name="Haeuser-Hahn I."/>
            <person name="Vaupel M."/>
            <person name="Koopmann E."/>
            <person name="Friedrich G."/>
            <person name="Voss H."/>
            <person name="Schlueter T."/>
            <person name="Margolis J."/>
            <person name="Platt D."/>
            <person name="Swimmer C."/>
            <person name="Gnirke A."/>
            <person name="Chen F."/>
            <person name="Vysotskaia V."/>
            <person name="Mannhaupt G."/>
            <person name="Gueldener U."/>
            <person name="Muensterkoetter M."/>
            <person name="Haase D."/>
            <person name="Oesterheld M."/>
            <person name="Mewes H.-W."/>
            <person name="Mauceli E.W."/>
            <person name="DeCaprio D."/>
            <person name="Wade C.M."/>
            <person name="Butler J."/>
            <person name="Young S.K."/>
            <person name="Jaffe D.B."/>
            <person name="Calvo S.E."/>
            <person name="Nusbaum C."/>
            <person name="Galagan J.E."/>
            <person name="Birren B.W."/>
        </authorList>
    </citation>
    <scope>NUCLEOTIDE SEQUENCE [LARGE SCALE GENOMIC DNA]</scope>
    <source>
        <strain>DSM 14603 / FGSC 9021 / UM521</strain>
    </source>
</reference>
<sequence length="533" mass="60941">MVRWLYSTNAKDIGTLYLIFAVFAAMIGTAFSVLIRMELAAPGVQYLNGDHQLYNVIITAHAFVMIFFMVMPAMVGGFGNYLVPVMIGAPDMAFPRLNNISFWLLPPSLILLLASAFVEQGAGTGWTVKCKLSQIIIMFVSIYNLLNITRCGKLLYSEMNTHSVLTYISTMFNDVKMSSTWGQSAWILYKIIIPRGITYIKLVVGVLSYTMYKVYTYSISLFYVVYNSVSFNKNPSETQRNVFSSGRGVNNSTNFKEWLVGITDGDGTFYFAKTKKGIWSFSFQIGQSNYNIRLLYYIKSMLGIGSVSVTHAKDNTAHYRVRNIQHIIQYILPIFDTYPLLTSKYFNYDLFKKAILIMNDSSLSNQEKDEKISYLKSQSLPDNYISPAWNNVNNQVTSILDAMSVMTKSWLIGFTEAEGSFYIVKKGPLRLVHAFEISQKLDHIVLEAIALILDIKVTTKKTYMTVVTTNYKSIENIISYFFKTMKGMKALEYRIWARSFNKKGSGRFEYMTKIQNLMRNIRSIRLDKNFTKK</sequence>
<proteinExistence type="inferred from homology"/>
<feature type="chain" id="PRO_0000271153" description="Truncated non-functional cytochrome oxidase 1">
    <location>
        <begin position="1"/>
        <end status="unknown"/>
    </location>
</feature>
<feature type="chain" id="PRO_0000271154" description="Intron-encoded endonuclease aI2">
    <location>
        <begin status="unknown"/>
        <end position="533"/>
    </location>
</feature>
<feature type="transmembrane region" description="Helical" evidence="2">
    <location>
        <begin position="15"/>
        <end position="35"/>
    </location>
</feature>
<feature type="transmembrane region" description="Helical" evidence="2">
    <location>
        <begin position="56"/>
        <end position="76"/>
    </location>
</feature>
<feature type="transmembrane region" description="Helical" evidence="2">
    <location>
        <begin position="99"/>
        <end position="119"/>
    </location>
</feature>
<feature type="transmembrane region" description="Helical" evidence="2">
    <location>
        <begin position="135"/>
        <end position="155"/>
    </location>
</feature>
<feature type="region of interest" description="COX1 exons 1 and 2 encoded">
    <location>
        <begin position="1"/>
        <end position="128"/>
    </location>
</feature>
<feature type="region of interest" description="COX1 intron 2 encoded">
    <location>
        <begin position="129"/>
        <end position="533"/>
    </location>
</feature>
<keyword id="KW-0255">Endonuclease</keyword>
<keyword id="KW-0378">Hydrolase</keyword>
<keyword id="KW-0404">Intron homing</keyword>
<keyword id="KW-0472">Membrane</keyword>
<keyword id="KW-0496">Mitochondrion</keyword>
<keyword id="KW-0540">Nuclease</keyword>
<keyword id="KW-1185">Reference proteome</keyword>
<keyword id="KW-0812">Transmembrane</keyword>
<keyword id="KW-1133">Transmembrane helix</keyword>